<evidence type="ECO:0000250" key="1">
    <source>
        <dbReference type="UniProtKB" id="A0A077Y877"/>
    </source>
</evidence>
<evidence type="ECO:0000255" key="2"/>
<evidence type="ECO:0000256" key="3">
    <source>
        <dbReference type="SAM" id="MobiDB-lite"/>
    </source>
</evidence>
<evidence type="ECO:0000269" key="4">
    <source>
    </source>
</evidence>
<evidence type="ECO:0000269" key="5">
    <source>
    </source>
</evidence>
<evidence type="ECO:0000269" key="6">
    <source>
    </source>
</evidence>
<evidence type="ECO:0000303" key="7">
    <source>
    </source>
</evidence>
<evidence type="ECO:0000303" key="8">
    <source>
    </source>
</evidence>
<evidence type="ECO:0000303" key="9">
    <source>
    </source>
</evidence>
<evidence type="ECO:0000305" key="10"/>
<evidence type="ECO:0000312" key="11">
    <source>
        <dbReference type="EMBL" id="CAD51601.1"/>
    </source>
</evidence>
<evidence type="ECO:0000312" key="12">
    <source>
        <dbReference type="Proteomes" id="UP000001450"/>
    </source>
</evidence>
<sequence length="684" mass="78742">MEKDFTERSTKGQRKLANGVVENIESKLKNHLDNNNVINKSVNYEDVMCSNVKLSVHDDEYDIKNIKKDVCNLSKLSEERLSNNISLKDNNKVVKNPEIDTKTARQQYKKRLNSTQSTMNIEGNINNEKDDIIEDYDDGLIRNMDYEMSIVKNKRNNNNNNNNNNNNNNNNNNNNNNNNNNNNNNNNSNNVDNRKRNKNEECYDESYCISDNLDEITSYRNKLSLYNKLRMCFNYFGPGWIVAIAYLDPGNLCSNLNVGLIRSPDPTLEKDYSGYYLLWIMVYGHMLGFIFQVLSMRLGHVTGLDLASLCSKEFDRTTSTIIYVLVQIAIWGAHIQAIIGTFIALNLIFGISVKVAIFYTLFEAIIYSFLENKSLGLLENVLSFLVGILAVSFFVNVFMTPINFKELAISILYPRIPKGKEIDALALLGSIISAHIFYLHTNLTAKKKSVICNDLSLRRYNTLGTIESGGSLFLSCLTNCIIVLTFAEVNLKSFERRDQYNLFTAYEVMRKSFGKISMYIWSFGLLSSGNNSSFMCEYASKSVVEGFLNKKINTFVRVFTFRLMLFSLLYMFLTLNKYTLDQLTNFINVIQVLLLPMATIPLYRFSIHENVLGEFRLKKFPKFAVFLIIIAIIISNVLLTFLDFVHKETSLITIFFLVIFSFLYFGFIIYFFNIPIKKNYIQRN</sequence>
<name>DMT1_PLAF7</name>
<dbReference type="EMBL" id="AL844504">
    <property type="protein sequence ID" value="CAD51601.1"/>
    <property type="molecule type" value="Genomic_DNA"/>
</dbReference>
<dbReference type="RefSeq" id="XP_001351794.1">
    <property type="nucleotide sequence ID" value="XM_001351758.1"/>
</dbReference>
<dbReference type="SMR" id="Q8I3M7"/>
<dbReference type="FunCoup" id="Q8I3M7">
    <property type="interactions" value="39"/>
</dbReference>
<dbReference type="STRING" id="36329.Q8I3M7"/>
<dbReference type="TCDB" id="2.A.55.2.25">
    <property type="family name" value="the metal ion (mn(2+)-iron) transporter (nramp) family"/>
</dbReference>
<dbReference type="PaxDb" id="5833-PFE1185w"/>
<dbReference type="EnsemblProtists" id="CAD51601">
    <property type="protein sequence ID" value="CAD51601"/>
    <property type="gene ID" value="PF3D7_0523800"/>
</dbReference>
<dbReference type="GeneID" id="813052"/>
<dbReference type="KEGG" id="pfa:PF3D7_0523800"/>
<dbReference type="VEuPathDB" id="PlasmoDB:PF3D7_0523800"/>
<dbReference type="HOGENOM" id="CLU_024036_0_0_1"/>
<dbReference type="InParanoid" id="Q8I3M7"/>
<dbReference type="OMA" id="AFHFNGH"/>
<dbReference type="OrthoDB" id="1093299at2759"/>
<dbReference type="PhylomeDB" id="Q8I3M7"/>
<dbReference type="Reactome" id="R-PFA-1222556">
    <property type="pathway name" value="ROS and RNS production in phagocytes"/>
</dbReference>
<dbReference type="Reactome" id="R-PFA-425410">
    <property type="pathway name" value="Metal ion SLC transporters"/>
</dbReference>
<dbReference type="Reactome" id="R-PFA-6798695">
    <property type="pathway name" value="Neutrophil degranulation"/>
</dbReference>
<dbReference type="Reactome" id="R-PFA-6803544">
    <property type="pathway name" value="Ion influx/efflux at host-pathogen interface"/>
</dbReference>
<dbReference type="Reactome" id="R-PFA-917937">
    <property type="pathway name" value="Iron uptake and transport"/>
</dbReference>
<dbReference type="Proteomes" id="UP000001450">
    <property type="component" value="Chromosome 5"/>
</dbReference>
<dbReference type="GO" id="GO:0016020">
    <property type="term" value="C:membrane"/>
    <property type="evidence" value="ECO:0000250"/>
    <property type="project" value="GeneDB"/>
</dbReference>
<dbReference type="GO" id="GO:0005886">
    <property type="term" value="C:plasma membrane"/>
    <property type="evidence" value="ECO:0000318"/>
    <property type="project" value="GO_Central"/>
</dbReference>
<dbReference type="GO" id="GO:0005774">
    <property type="term" value="C:vacuolar membrane"/>
    <property type="evidence" value="ECO:0007669"/>
    <property type="project" value="UniProtKB-SubCell"/>
</dbReference>
<dbReference type="GO" id="GO:0015086">
    <property type="term" value="F:cadmium ion transmembrane transporter activity"/>
    <property type="evidence" value="ECO:0000318"/>
    <property type="project" value="GO_Central"/>
</dbReference>
<dbReference type="GO" id="GO:0005384">
    <property type="term" value="F:manganese ion transmembrane transporter activity"/>
    <property type="evidence" value="ECO:0000318"/>
    <property type="project" value="GO_Central"/>
</dbReference>
<dbReference type="GO" id="GO:0034755">
    <property type="term" value="P:iron ion transmembrane transport"/>
    <property type="evidence" value="ECO:0000318"/>
    <property type="project" value="GO_Central"/>
</dbReference>
<dbReference type="GO" id="GO:0006828">
    <property type="term" value="P:manganese ion transport"/>
    <property type="evidence" value="ECO:0000318"/>
    <property type="project" value="GO_Central"/>
</dbReference>
<dbReference type="InterPro" id="IPR001046">
    <property type="entry name" value="NRAMP_fam"/>
</dbReference>
<dbReference type="NCBIfam" id="NF037982">
    <property type="entry name" value="Nramp_1"/>
    <property type="match status" value="1"/>
</dbReference>
<dbReference type="PANTHER" id="PTHR11706:SF33">
    <property type="entry name" value="NATURAL RESISTANCE-ASSOCIATED MACROPHAGE PROTEIN 2"/>
    <property type="match status" value="1"/>
</dbReference>
<dbReference type="PANTHER" id="PTHR11706">
    <property type="entry name" value="SOLUTE CARRIER PROTEIN FAMILY 11 MEMBER"/>
    <property type="match status" value="1"/>
</dbReference>
<dbReference type="Pfam" id="PF01566">
    <property type="entry name" value="Nramp"/>
    <property type="match status" value="1"/>
</dbReference>
<dbReference type="PRINTS" id="PR00447">
    <property type="entry name" value="NATRESASSCMP"/>
</dbReference>
<comment type="function">
    <text evidence="1 5">Iron transporter (By similarity). Required for parasite development during the blood stages (PubMed:39467134). Required for apicoplast biogenesis (PubMed:39467134). Required for mitochondrial polarization (PubMed:39467134).</text>
</comment>
<comment type="catalytic activity">
    <reaction evidence="1">
        <text>Fe(2+)(in) = Fe(2+)(out)</text>
        <dbReference type="Rhea" id="RHEA:28486"/>
        <dbReference type="ChEBI" id="CHEBI:29033"/>
    </reaction>
</comment>
<comment type="subcellular location">
    <subcellularLocation>
        <location evidence="4 5">Vacuole membrane</location>
        <topology evidence="2">Multi-pass membrane protein</topology>
    </subcellularLocation>
</comment>
<comment type="developmental stage">
    <text evidence="4">Expressed in asexual blood stage parasites (at protein level).</text>
</comment>
<comment type="induction">
    <text evidence="6">Expression is modulated by the levels of iron ions in the environment.</text>
</comment>
<comment type="disruption phenotype">
    <text evidence="4 5">Repeated attempts to generate a knockout failed (PubMed:35404116). Conditional knockdown results in rapid parasite death (PubMed:39467134). Impaired apicoplast biogenesis (PubMed:39467134). Impaired mitochondrial polarization (PubMed:39467134).</text>
</comment>
<comment type="miscellaneous">
    <text evidence="5">Exogenous supplementation with non-toxic concentrations of iron or other metals does not rescue parasites with stringent gene knockout (PubMed:39467134). Culture supplementation with Fe(2+), but not other metals, nearly fully rescues parasites with partial gene knockout (PubMed:39467134).</text>
</comment>
<comment type="similarity">
    <text evidence="10">Belongs to the NRAMP (TC 2.A.55) family.</text>
</comment>
<gene>
    <name evidence="7" type="primary">FVRT1</name>
    <name evidence="11" type="ORF">PF3D7_0523800</name>
</gene>
<organism evidence="12">
    <name type="scientific">Plasmodium falciparum (isolate 3D7)</name>
    <dbReference type="NCBI Taxonomy" id="36329"/>
    <lineage>
        <taxon>Eukaryota</taxon>
        <taxon>Sar</taxon>
        <taxon>Alveolata</taxon>
        <taxon>Apicomplexa</taxon>
        <taxon>Aconoidasida</taxon>
        <taxon>Haemosporida</taxon>
        <taxon>Plasmodiidae</taxon>
        <taxon>Plasmodium</taxon>
        <taxon>Plasmodium (Laverania)</taxon>
    </lineage>
</organism>
<feature type="chain" id="PRO_0000461921" description="Divalent metal transporter 1" evidence="2">
    <location>
        <begin position="1"/>
        <end position="684"/>
    </location>
</feature>
<feature type="topological domain" description="Cytoplasmic" evidence="10">
    <location>
        <begin position="1"/>
        <end position="228"/>
    </location>
</feature>
<feature type="transmembrane region" description="Helical" evidence="2">
    <location>
        <begin position="229"/>
        <end position="247"/>
    </location>
</feature>
<feature type="topological domain" description="Vacuolar" evidence="10">
    <location>
        <begin position="248"/>
        <end position="275"/>
    </location>
</feature>
<feature type="transmembrane region" description="Helical" evidence="2">
    <location>
        <begin position="276"/>
        <end position="299"/>
    </location>
</feature>
<feature type="topological domain" description="Cytoplasmic" evidence="10">
    <location>
        <begin position="300"/>
        <end position="319"/>
    </location>
</feature>
<feature type="transmembrane region" description="Helical" evidence="2">
    <location>
        <begin position="320"/>
        <end position="345"/>
    </location>
</feature>
<feature type="topological domain" description="Vacuolar" evidence="10">
    <location>
        <begin position="346"/>
        <end position="350"/>
    </location>
</feature>
<feature type="transmembrane region" description="Helical" evidence="2">
    <location>
        <begin position="351"/>
        <end position="370"/>
    </location>
</feature>
<feature type="topological domain" description="Cytoplasmic" evidence="10">
    <location>
        <begin position="371"/>
        <end position="381"/>
    </location>
</feature>
<feature type="transmembrane region" description="Helical" evidence="2">
    <location>
        <begin position="382"/>
        <end position="404"/>
    </location>
</feature>
<feature type="topological domain" description="Vacuolar" evidence="10">
    <location>
        <begin position="405"/>
        <end position="423"/>
    </location>
</feature>
<feature type="transmembrane region" description="Helical" evidence="2">
    <location>
        <begin position="424"/>
        <end position="445"/>
    </location>
</feature>
<feature type="topological domain" description="Cytoplasmic" evidence="10">
    <location>
        <begin position="446"/>
        <end position="465"/>
    </location>
</feature>
<feature type="transmembrane region" description="Helical" evidence="2">
    <location>
        <begin position="466"/>
        <end position="487"/>
    </location>
</feature>
<feature type="topological domain" description="Vacuolar" evidence="10">
    <location>
        <begin position="488"/>
        <end position="515"/>
    </location>
</feature>
<feature type="transmembrane region" description="Helical" evidence="2">
    <location>
        <begin position="516"/>
        <end position="534"/>
    </location>
</feature>
<feature type="topological domain" description="Cytoplasmic" evidence="10">
    <location>
        <begin position="535"/>
        <end position="554"/>
    </location>
</feature>
<feature type="transmembrane region" description="Helical" evidence="2">
    <location>
        <begin position="555"/>
        <end position="573"/>
    </location>
</feature>
<feature type="topological domain" description="Vacuolar" evidence="10">
    <location>
        <begin position="574"/>
        <end position="584"/>
    </location>
</feature>
<feature type="transmembrane region" description="Helical" evidence="2">
    <location>
        <begin position="585"/>
        <end position="603"/>
    </location>
</feature>
<feature type="topological domain" description="Cytoplasmic" evidence="10">
    <location>
        <begin position="604"/>
        <end position="622"/>
    </location>
</feature>
<feature type="transmembrane region" description="Helical" evidence="2">
    <location>
        <begin position="623"/>
        <end position="645"/>
    </location>
</feature>
<feature type="topological domain" description="Vacuolar" evidence="10">
    <location>
        <begin position="646"/>
        <end position="650"/>
    </location>
</feature>
<feature type="transmembrane region" description="Helical" evidence="2">
    <location>
        <begin position="651"/>
        <end position="673"/>
    </location>
</feature>
<feature type="topological domain" description="Cytoplasmic" evidence="5">
    <location>
        <begin position="674"/>
        <end position="684"/>
    </location>
</feature>
<feature type="region of interest" description="Disordered" evidence="3">
    <location>
        <begin position="153"/>
        <end position="195"/>
    </location>
</feature>
<feature type="compositionally biased region" description="Low complexity" evidence="3">
    <location>
        <begin position="156"/>
        <end position="191"/>
    </location>
</feature>
<keyword id="KW-0406">Ion transport</keyword>
<keyword id="KW-0408">Iron</keyword>
<keyword id="KW-0410">Iron transport</keyword>
<keyword id="KW-0472">Membrane</keyword>
<keyword id="KW-1185">Reference proteome</keyword>
<keyword id="KW-0812">Transmembrane</keyword>
<keyword id="KW-1133">Transmembrane helix</keyword>
<keyword id="KW-0813">Transport</keyword>
<keyword id="KW-0926">Vacuole</keyword>
<accession>Q8I3M7</accession>
<protein>
    <recommendedName>
        <fullName evidence="8">Divalent metal transporter 1</fullName>
        <shortName evidence="8">DMT1</shortName>
        <shortName evidence="8 9">PfDMT1</shortName>
    </recommendedName>
    <alternativeName>
        <fullName evidence="7">Food vacuole resident transporter 1</fullName>
    </alternativeName>
    <alternativeName>
        <fullName evidence="9">PfNRAMP</fullName>
    </alternativeName>
</protein>
<reference evidence="12" key="1">
    <citation type="journal article" date="2002" name="Nature">
        <title>Genome sequence of the human malaria parasite Plasmodium falciparum.</title>
        <authorList>
            <person name="Gardner M.J."/>
            <person name="Hall N."/>
            <person name="Fung E."/>
            <person name="White O."/>
            <person name="Berriman M."/>
            <person name="Hyman R.W."/>
            <person name="Carlton J.M."/>
            <person name="Pain A."/>
            <person name="Nelson K.E."/>
            <person name="Bowman S."/>
            <person name="Paulsen I.T."/>
            <person name="James K.D."/>
            <person name="Eisen J.A."/>
            <person name="Rutherford K.M."/>
            <person name="Salzberg S.L."/>
            <person name="Craig A."/>
            <person name="Kyes S."/>
            <person name="Chan M.-S."/>
            <person name="Nene V."/>
            <person name="Shallom S.J."/>
            <person name="Suh B."/>
            <person name="Peterson J."/>
            <person name="Angiuoli S."/>
            <person name="Pertea M."/>
            <person name="Allen J."/>
            <person name="Selengut J."/>
            <person name="Haft D."/>
            <person name="Mather M.W."/>
            <person name="Vaidya A.B."/>
            <person name="Martin D.M.A."/>
            <person name="Fairlamb A.H."/>
            <person name="Fraunholz M.J."/>
            <person name="Roos D.S."/>
            <person name="Ralph S.A."/>
            <person name="McFadden G.I."/>
            <person name="Cummings L.M."/>
            <person name="Subramanian G.M."/>
            <person name="Mungall C."/>
            <person name="Venter J.C."/>
            <person name="Carucci D.J."/>
            <person name="Hoffman S.L."/>
            <person name="Newbold C."/>
            <person name="Davis R.W."/>
            <person name="Fraser C.M."/>
            <person name="Barrell B.G."/>
        </authorList>
    </citation>
    <scope>NUCLEOTIDE SEQUENCE [LARGE SCALE GENOMIC DNA]</scope>
    <source>
        <strain evidence="12">3D7</strain>
    </source>
</reference>
<reference evidence="12" key="2">
    <citation type="journal article" date="2002" name="Nature">
        <title>Sequence of Plasmodium falciparum chromosomes 1, 3-9 and 13.</title>
        <authorList>
            <person name="Hall N."/>
            <person name="Pain A."/>
            <person name="Berriman M."/>
            <person name="Churcher C.M."/>
            <person name="Harris B."/>
            <person name="Harris D."/>
            <person name="Mungall K.L."/>
            <person name="Bowman S."/>
            <person name="Atkin R."/>
            <person name="Baker S."/>
            <person name="Barron A."/>
            <person name="Brooks K."/>
            <person name="Buckee C.O."/>
            <person name="Burrows C."/>
            <person name="Cherevach I."/>
            <person name="Chillingworth C."/>
            <person name="Chillingworth T."/>
            <person name="Christodoulou Z."/>
            <person name="Clark L."/>
            <person name="Clark R."/>
            <person name="Corton C."/>
            <person name="Cronin A."/>
            <person name="Davies R.M."/>
            <person name="Davis P."/>
            <person name="Dear P."/>
            <person name="Dearden F."/>
            <person name="Doggett J."/>
            <person name="Feltwell T."/>
            <person name="Goble A."/>
            <person name="Goodhead I."/>
            <person name="Gwilliam R."/>
            <person name="Hamlin N."/>
            <person name="Hance Z."/>
            <person name="Harper D."/>
            <person name="Hauser H."/>
            <person name="Hornsby T."/>
            <person name="Holroyd S."/>
            <person name="Horrocks P."/>
            <person name="Humphray S."/>
            <person name="Jagels K."/>
            <person name="James K.D."/>
            <person name="Johnson D."/>
            <person name="Kerhornou A."/>
            <person name="Knights A."/>
            <person name="Konfortov B."/>
            <person name="Kyes S."/>
            <person name="Larke N."/>
            <person name="Lawson D."/>
            <person name="Lennard N."/>
            <person name="Line A."/>
            <person name="Maddison M."/>
            <person name="Mclean J."/>
            <person name="Mooney P."/>
            <person name="Moule S."/>
            <person name="Murphy L."/>
            <person name="Oliver K."/>
            <person name="Ormond D."/>
            <person name="Price C."/>
            <person name="Quail M.A."/>
            <person name="Rabbinowitsch E."/>
            <person name="Rajandream M.A."/>
            <person name="Rutter S."/>
            <person name="Rutherford K.M."/>
            <person name="Sanders M."/>
            <person name="Simmonds M."/>
            <person name="Seeger K."/>
            <person name="Sharp S."/>
            <person name="Smith R."/>
            <person name="Squares R."/>
            <person name="Squares S."/>
            <person name="Stevens K."/>
            <person name="Taylor K."/>
            <person name="Tivey A."/>
            <person name="Unwin L."/>
            <person name="Whitehead S."/>
            <person name="Woodward J.R."/>
            <person name="Sulston J.E."/>
            <person name="Craig A."/>
            <person name="Newbold C."/>
            <person name="Barrell B.G."/>
        </authorList>
    </citation>
    <scope>NUCLEOTIDE SEQUENCE [LARGE SCALE GENOMIC DNA]</scope>
    <source>
        <strain evidence="12">3D7</strain>
    </source>
</reference>
<reference evidence="10" key="3">
    <citation type="journal article" date="2022" name="MBio">
        <title>PMRT1, a Plasmodium-Specific Parasite Plasma Membrane Transporter, Is Essential for Asexual and Sexual Blood Stage Development.</title>
        <authorList>
            <person name="Wichers J.S."/>
            <person name="Mesen-Ramirez P."/>
            <person name="Fuchs G."/>
            <person name="Yu-Strzelczyk J."/>
            <person name="Staecker J."/>
            <person name="von Thien H."/>
            <person name="Alder A."/>
            <person name="Henshall I."/>
            <person name="Liffner B."/>
            <person name="Nagel G."/>
            <person name="Loew C."/>
            <person name="Wilson D."/>
            <person name="Spielmann T."/>
            <person name="Gao S."/>
            <person name="Gilberger T.W."/>
            <person name="Bachmann A."/>
            <person name="Strauss J."/>
        </authorList>
    </citation>
    <scope>SUBCELLULAR LOCATION</scope>
    <scope>DEVELOPMENTAL STAGE</scope>
    <scope>DISRUPTION PHENOTYPE</scope>
</reference>
<reference key="4">
    <citation type="journal article" date="2024" name="Front. Cell. Infect. Microbiol.">
        <title>Iron transport pathways in the human malaria parasite Plasmodium falciparum revealed by RNA-sequencing.</title>
        <authorList>
            <person name="Wunderlich J."/>
            <person name="Kotov V."/>
            <person name="Votborg-Novel L."/>
            <person name="Ntalla C."/>
            <person name="Geffken M."/>
            <person name="Peine S."/>
            <person name="Portugal S."/>
            <person name="Strauss J."/>
        </authorList>
    </citation>
    <scope>INDUCTION</scope>
</reference>
<reference evidence="10" key="5">
    <citation type="journal article" date="2024" name="Proc. Natl. Acad. Sci. U.S.A.">
        <title>Identification of a divalent metal transporter required for cellular iron metabolism in malaria parasites.</title>
        <authorList>
            <person name="Loveridge K.M."/>
            <person name="Sigala P.A."/>
        </authorList>
    </citation>
    <scope>FUNCTION</scope>
    <scope>SUBCELLULAR LOCATION</scope>
    <scope>DISRUPTION PHENOTYPE</scope>
    <scope>TOPOLOGY</scope>
</reference>
<proteinExistence type="evidence at protein level"/>